<accession>Q9AR04</accession>
<accession>A0A0G2R032</accession>
<accession>A0A0P0CC59</accession>
<accession>A0A1L7NYF5</accession>
<accession>A0A2U1M5G4</accession>
<accession>A2TEY7</accession>
<accession>C0KJU8</accession>
<accession>C5HG79</accession>
<accession>Q306S5</accession>
<accession>Q9FVM5</accession>
<accession>Q9FY41</accession>
<accession>Q9LW98</accession>
<dbReference type="EC" id="4.2.3.24" evidence="4 5 6"/>
<dbReference type="EMBL" id="AF138959">
    <property type="protein sequence ID" value="AAF61439.1"/>
    <property type="molecule type" value="mRNA"/>
</dbReference>
<dbReference type="EMBL" id="AF327527">
    <property type="protein sequence ID" value="AAK15697.1"/>
    <property type="molecule type" value="Genomic_DNA"/>
</dbReference>
<dbReference type="EMBL" id="AF327526">
    <property type="protein sequence ID" value="AAK15696.1"/>
    <property type="molecule type" value="mRNA"/>
</dbReference>
<dbReference type="EMBL" id="AJ251751">
    <property type="protein sequence ID" value="CAB94691.1"/>
    <property type="molecule type" value="mRNA"/>
</dbReference>
<dbReference type="EMBL" id="AY006482">
    <property type="protein sequence ID" value="AAF98444.1"/>
    <property type="molecule type" value="mRNA"/>
</dbReference>
<dbReference type="EMBL" id="DQ241826">
    <property type="protein sequence ID" value="ABB51572.1"/>
    <property type="molecule type" value="mRNA"/>
</dbReference>
<dbReference type="EMBL" id="EF197888">
    <property type="protein sequence ID" value="ABM88787.1"/>
    <property type="molecule type" value="mRNA"/>
</dbReference>
<dbReference type="EMBL" id="FJ432667">
    <property type="protein sequence ID" value="ACL15394.1"/>
    <property type="status" value="ALT_SEQ"/>
    <property type="molecule type" value="Genomic_DNA"/>
</dbReference>
<dbReference type="EMBL" id="HQ315833">
    <property type="protein sequence ID" value="ADU25497.1"/>
    <property type="molecule type" value="mRNA"/>
</dbReference>
<dbReference type="EMBL" id="JQ319661">
    <property type="protein sequence ID" value="AFA34434.1"/>
    <property type="molecule type" value="mRNA"/>
</dbReference>
<dbReference type="EMBL" id="KJ609176">
    <property type="protein sequence ID" value="AIC83777.1"/>
    <property type="molecule type" value="mRNA"/>
</dbReference>
<dbReference type="EMBL" id="KR445687">
    <property type="protein sequence ID" value="ALJ03212.1"/>
    <property type="status" value="ALT_INIT"/>
    <property type="molecule type" value="mRNA"/>
</dbReference>
<dbReference type="EMBL" id="LC106014">
    <property type="protein sequence ID" value="BAW34953.1"/>
    <property type="molecule type" value="Genomic_DNA"/>
</dbReference>
<dbReference type="EMBL" id="PKPP01006435">
    <property type="protein sequence ID" value="PWA56512.1"/>
    <property type="status" value="ALT_SEQ"/>
    <property type="molecule type" value="Genomic_DNA"/>
</dbReference>
<dbReference type="EMBL" id="FJ613423">
    <property type="protein sequence ID" value="ACM80358.1"/>
    <property type="molecule type" value="Genomic_DNA"/>
</dbReference>
<dbReference type="SMR" id="Q9AR04"/>
<dbReference type="STRING" id="35608.Q9AR04"/>
<dbReference type="KEGG" id="ag:AAF98444"/>
<dbReference type="OrthoDB" id="1877784at2759"/>
<dbReference type="BioCyc" id="MetaCyc:MONOMER-12183"/>
<dbReference type="BRENDA" id="4.2.3.24">
    <property type="organism ID" value="7150"/>
</dbReference>
<dbReference type="Proteomes" id="UP000245207">
    <property type="component" value="Unassembled WGS sequence"/>
</dbReference>
<dbReference type="GO" id="GO:0005737">
    <property type="term" value="C:cytoplasm"/>
    <property type="evidence" value="ECO:0007669"/>
    <property type="project" value="UniProtKB-SubCell"/>
</dbReference>
<dbReference type="GO" id="GO:0034006">
    <property type="term" value="F:amorpha-4,11-diene synthase activity"/>
    <property type="evidence" value="ECO:0000314"/>
    <property type="project" value="UniProtKB"/>
</dbReference>
<dbReference type="GO" id="GO:0000287">
    <property type="term" value="F:magnesium ion binding"/>
    <property type="evidence" value="ECO:0007669"/>
    <property type="project" value="InterPro"/>
</dbReference>
<dbReference type="GO" id="GO:0016102">
    <property type="term" value="P:diterpenoid biosynthetic process"/>
    <property type="evidence" value="ECO:0007669"/>
    <property type="project" value="InterPro"/>
</dbReference>
<dbReference type="GO" id="GO:0009739">
    <property type="term" value="P:response to gibberellin"/>
    <property type="evidence" value="ECO:0000270"/>
    <property type="project" value="UniProtKB"/>
</dbReference>
<dbReference type="GO" id="GO:0000302">
    <property type="term" value="P:response to reactive oxygen species"/>
    <property type="evidence" value="ECO:0000270"/>
    <property type="project" value="UniProtKB"/>
</dbReference>
<dbReference type="GO" id="GO:0051761">
    <property type="term" value="P:sesquiterpene metabolic process"/>
    <property type="evidence" value="ECO:0000314"/>
    <property type="project" value="UniProtKB"/>
</dbReference>
<dbReference type="CDD" id="cd00684">
    <property type="entry name" value="Terpene_cyclase_plant_C1"/>
    <property type="match status" value="1"/>
</dbReference>
<dbReference type="FunFam" id="1.10.600.10:FF:000007">
    <property type="entry name" value="Isoprene synthase, chloroplastic"/>
    <property type="match status" value="1"/>
</dbReference>
<dbReference type="FunFam" id="1.50.10.130:FF:000001">
    <property type="entry name" value="Isoprene synthase, chloroplastic"/>
    <property type="match status" value="1"/>
</dbReference>
<dbReference type="Gene3D" id="1.10.600.10">
    <property type="entry name" value="Farnesyl Diphosphate Synthase"/>
    <property type="match status" value="1"/>
</dbReference>
<dbReference type="Gene3D" id="1.50.10.130">
    <property type="entry name" value="Terpene synthase, N-terminal domain"/>
    <property type="match status" value="1"/>
</dbReference>
<dbReference type="InterPro" id="IPR008949">
    <property type="entry name" value="Isoprenoid_synthase_dom_sf"/>
</dbReference>
<dbReference type="InterPro" id="IPR034741">
    <property type="entry name" value="Terpene_cyclase-like_1_C"/>
</dbReference>
<dbReference type="InterPro" id="IPR044814">
    <property type="entry name" value="Terpene_cyclase_plant_C1"/>
</dbReference>
<dbReference type="InterPro" id="IPR001906">
    <property type="entry name" value="Terpene_synth_N"/>
</dbReference>
<dbReference type="InterPro" id="IPR036965">
    <property type="entry name" value="Terpene_synth_N_sf"/>
</dbReference>
<dbReference type="InterPro" id="IPR050148">
    <property type="entry name" value="Terpene_synthase-like"/>
</dbReference>
<dbReference type="InterPro" id="IPR005630">
    <property type="entry name" value="Terpene_synthase_metal-bd"/>
</dbReference>
<dbReference type="InterPro" id="IPR008930">
    <property type="entry name" value="Terpenoid_cyclase/PrenylTrfase"/>
</dbReference>
<dbReference type="PANTHER" id="PTHR31225:SF250">
    <property type="entry name" value="(-)-BETA-CARYOPHYLLENE SYNTHASE"/>
    <property type="match status" value="1"/>
</dbReference>
<dbReference type="PANTHER" id="PTHR31225">
    <property type="entry name" value="OS04G0344100 PROTEIN-RELATED"/>
    <property type="match status" value="1"/>
</dbReference>
<dbReference type="Pfam" id="PF01397">
    <property type="entry name" value="Terpene_synth"/>
    <property type="match status" value="1"/>
</dbReference>
<dbReference type="Pfam" id="PF03936">
    <property type="entry name" value="Terpene_synth_C"/>
    <property type="match status" value="1"/>
</dbReference>
<dbReference type="SFLD" id="SFLDS00005">
    <property type="entry name" value="Isoprenoid_Synthase_Type_I"/>
    <property type="match status" value="1"/>
</dbReference>
<dbReference type="SFLD" id="SFLDG01019">
    <property type="entry name" value="Terpene_Cyclase_Like_1_C_Termi"/>
    <property type="match status" value="1"/>
</dbReference>
<dbReference type="SUPFAM" id="SSF48239">
    <property type="entry name" value="Terpenoid cyclases/Protein prenyltransferases"/>
    <property type="match status" value="1"/>
</dbReference>
<dbReference type="SUPFAM" id="SSF48576">
    <property type="entry name" value="Terpenoid synthases"/>
    <property type="match status" value="1"/>
</dbReference>
<evidence type="ECO:0000250" key="1">
    <source>
        <dbReference type="UniProtKB" id="A0A1C9J6A7"/>
    </source>
</evidence>
<evidence type="ECO:0000250" key="2">
    <source>
        <dbReference type="UniProtKB" id="Q40577"/>
    </source>
</evidence>
<evidence type="ECO:0000269" key="3">
    <source>
    </source>
</evidence>
<evidence type="ECO:0000269" key="4">
    <source>
    </source>
</evidence>
<evidence type="ECO:0000269" key="5">
    <source>
    </source>
</evidence>
<evidence type="ECO:0000269" key="6">
    <source>
    </source>
</evidence>
<evidence type="ECO:0000269" key="7">
    <source>
    </source>
</evidence>
<evidence type="ECO:0000269" key="8">
    <source>
    </source>
</evidence>
<evidence type="ECO:0000269" key="9">
    <source>
    </source>
</evidence>
<evidence type="ECO:0000269" key="10">
    <source>
    </source>
</evidence>
<evidence type="ECO:0000269" key="11">
    <source>
    </source>
</evidence>
<evidence type="ECO:0000269" key="12">
    <source>
    </source>
</evidence>
<evidence type="ECO:0000269" key="13">
    <source ref="18"/>
</evidence>
<evidence type="ECO:0000303" key="14">
    <source>
    </source>
</evidence>
<evidence type="ECO:0000303" key="15">
    <source>
    </source>
</evidence>
<evidence type="ECO:0000303" key="16">
    <source>
    </source>
</evidence>
<evidence type="ECO:0000303" key="17">
    <source>
    </source>
</evidence>
<evidence type="ECO:0000303" key="18">
    <source>
    </source>
</evidence>
<evidence type="ECO:0000303" key="19">
    <source>
    </source>
</evidence>
<evidence type="ECO:0000303" key="20">
    <source>
    </source>
</evidence>
<evidence type="ECO:0000303" key="21">
    <source ref="2"/>
</evidence>
<evidence type="ECO:0000305" key="22"/>
<evidence type="ECO:0000312" key="23">
    <source>
        <dbReference type="EMBL" id="PWA56512.1"/>
    </source>
</evidence>
<feature type="chain" id="PRO_0000248160" description="Amorpha-4,11-diene synthase">
    <location>
        <begin position="1"/>
        <end position="546"/>
    </location>
</feature>
<feature type="short sequence motif" description="DDXXD motif" evidence="1">
    <location>
        <begin position="299"/>
        <end position="303"/>
    </location>
</feature>
<feature type="binding site" evidence="2">
    <location>
        <position position="299"/>
    </location>
    <ligand>
        <name>Mg(2+)</name>
        <dbReference type="ChEBI" id="CHEBI:18420"/>
        <label>1</label>
    </ligand>
</feature>
<feature type="binding site" evidence="2">
    <location>
        <position position="299"/>
    </location>
    <ligand>
        <name>Mg(2+)</name>
        <dbReference type="ChEBI" id="CHEBI:18420"/>
        <label>2</label>
    </ligand>
</feature>
<feature type="binding site" evidence="1">
    <location>
        <position position="299"/>
    </location>
    <ligand>
        <name>substrate</name>
    </ligand>
</feature>
<feature type="binding site" evidence="2">
    <location>
        <position position="303"/>
    </location>
    <ligand>
        <name>Mg(2+)</name>
        <dbReference type="ChEBI" id="CHEBI:18420"/>
        <label>1</label>
    </ligand>
</feature>
<feature type="binding site" evidence="2">
    <location>
        <position position="303"/>
    </location>
    <ligand>
        <name>Mg(2+)</name>
        <dbReference type="ChEBI" id="CHEBI:18420"/>
        <label>2</label>
    </ligand>
</feature>
<feature type="binding site" evidence="1">
    <location>
        <position position="303"/>
    </location>
    <ligand>
        <name>substrate</name>
    </ligand>
</feature>
<feature type="binding site" evidence="1">
    <location>
        <position position="440"/>
    </location>
    <ligand>
        <name>substrate</name>
    </ligand>
</feature>
<feature type="binding site" evidence="2">
    <location>
        <position position="443"/>
    </location>
    <ligand>
        <name>Mg(2+)</name>
        <dbReference type="ChEBI" id="CHEBI:18420"/>
        <label>3</label>
    </ligand>
</feature>
<feature type="binding site" evidence="2">
    <location>
        <position position="447"/>
    </location>
    <ligand>
        <name>Mg(2+)</name>
        <dbReference type="ChEBI" id="CHEBI:18420"/>
        <label>3</label>
    </ligand>
</feature>
<feature type="binding site" evidence="2">
    <location>
        <position position="451"/>
    </location>
    <ligand>
        <name>Mg(2+)</name>
        <dbReference type="ChEBI" id="CHEBI:18420"/>
        <label>3</label>
    </ligand>
</feature>
<feature type="sequence conflict" description="In Ref. 5; ABB51572." evidence="22" ref="5">
    <original>F</original>
    <variation>S</variation>
    <location>
        <position position="24"/>
    </location>
</feature>
<feature type="sequence conflict" description="In Ref. 13; PWA56512." evidence="22" ref="13">
    <original>E</original>
    <variation>D</variation>
    <location>
        <position position="28"/>
    </location>
</feature>
<feature type="sequence conflict" description="In Ref. 4; AAF98444." evidence="22" ref="4">
    <original>E</original>
    <variation>Q</variation>
    <location>
        <position position="28"/>
    </location>
</feature>
<feature type="sequence conflict" description="In Ref. 13; PWA56512." evidence="22" ref="13">
    <original>N</original>
    <variation>K</variation>
    <location>
        <position position="40"/>
    </location>
</feature>
<feature type="sequence conflict" description="In Ref. 10; AIC83777." evidence="22" ref="10">
    <original>A</original>
    <variation>V</variation>
    <location>
        <position position="61"/>
    </location>
</feature>
<feature type="sequence conflict" description="In Ref. 13; PWA56512." evidence="22" ref="13">
    <original>L</original>
    <variation>P</variation>
    <location>
        <position position="66"/>
    </location>
</feature>
<feature type="sequence conflict" description="In Ref. 2; AAK15696/AAK15697, 7; ACL15394 and 13; PWA56512." evidence="22" ref="2 7 13">
    <original>R</original>
    <variation>Q</variation>
    <location>
        <position position="81"/>
    </location>
</feature>
<feature type="sequence conflict" description="In Ref. 13; PWA56512." evidence="22" ref="13">
    <original>W</original>
    <variation>Y</variation>
    <location>
        <position position="98"/>
    </location>
</feature>
<feature type="sequence conflict" description="In Ref. 2; AAK15696/AAK15697 and 7; ACL15394." evidence="22" ref="2 7">
    <original>N</original>
    <variation>D</variation>
    <location>
        <position position="99"/>
    </location>
</feature>
<feature type="sequence conflict" description="In Ref. 13; PWA56512." evidence="22" ref="13">
    <original>R</original>
    <variation>H</variation>
    <location>
        <position position="108"/>
    </location>
</feature>
<feature type="sequence conflict" description="In Ref. 2; AAK15696/AAK15697 and 7; ACL15394." evidence="22" ref="2 7">
    <original>N</original>
    <variation>D</variation>
    <location>
        <position position="129"/>
    </location>
</feature>
<feature type="sequence conflict" description="In Ref. 5; ABB51572." evidence="22" ref="5">
    <original>I</original>
    <variation>T</variation>
    <location>
        <position position="158"/>
    </location>
</feature>
<feature type="sequence conflict" description="In Ref. 2; AAK15696/AAK15697 and 7; ACL15394." evidence="22" ref="2 7">
    <original>I</original>
    <variation>M</variation>
    <location>
        <position position="159"/>
    </location>
</feature>
<feature type="sequence conflict" description="In Ref. 3; CAB94691." evidence="22" ref="3">
    <original>I</original>
    <variation>M</variation>
    <location>
        <position position="173"/>
    </location>
</feature>
<feature type="sequence conflict" description="In Ref. 13; PWA56512." evidence="22" ref="13">
    <original>D</original>
    <variation>Y</variation>
    <location>
        <position position="217"/>
    </location>
</feature>
<feature type="sequence conflict" description="In Ref. 13; PWA56512." evidence="22" ref="13">
    <original>H</original>
    <variation>Q</variation>
    <location>
        <position position="244"/>
    </location>
</feature>
<feature type="sequence conflict" description="In Ref. 10; AIC83777." evidence="22" ref="10">
    <original>V</original>
    <variation>A</variation>
    <location>
        <position position="266"/>
    </location>
</feature>
<feature type="sequence conflict" description="In Ref. 2; AAK15696/AAK15697, 3; CAB94691, 7; ACL15394 and 13; PWA56512." evidence="22" ref="2 3 7 13">
    <original>Y</original>
    <variation>F</variation>
    <location>
        <position position="277"/>
    </location>
</feature>
<feature type="sequence conflict" description="In Ref. 13; PWA56512." evidence="22" ref="13">
    <original>TKA</original>
    <variation>AKV</variation>
    <location>
        <begin position="289"/>
        <end position="291"/>
    </location>
</feature>
<feature type="sequence conflict" description="In Ref. 13; PWA56512." evidence="22" ref="13">
    <original>L</original>
    <variation>F</variation>
    <location>
        <position position="339"/>
    </location>
</feature>
<feature type="sequence conflict" description="In Ref. 13; PWA56512." evidence="22" ref="13">
    <original>F</original>
    <variation>T</variation>
    <location>
        <position position="350"/>
    </location>
</feature>
<feature type="sequence conflict" description="In Ref. 13; PWA56512." evidence="22" ref="13">
    <original>R</original>
    <variation>K</variation>
    <location>
        <position position="356"/>
    </location>
</feature>
<feature type="sequence conflict" description="In Ref. 13; PWA56512." evidence="22" ref="13">
    <original>VKEFVRN</original>
    <variation>MKEFIRG</variation>
    <location>
        <begin position="367"/>
        <end position="373"/>
    </location>
</feature>
<feature type="sequence conflict" description="In Ref. 6; ABM88787, 8; ADU25497, 9; AFA34434 and 11; ALJ03212." evidence="22" ref="6 8 9 11">
    <original>V</original>
    <variation>F</variation>
    <location>
        <position position="376"/>
    </location>
</feature>
<feature type="sequence conflict" description="In Ref. 5; ABB51572." evidence="22" ref="5">
    <original>K</original>
    <variation>N</variation>
    <location>
        <position position="379"/>
    </location>
</feature>
<feature type="sequence conflict" description="In Ref. 13; PWA56512." evidence="22" ref="13">
    <original>E</original>
    <variation>V</variation>
    <location>
        <position position="391"/>
    </location>
</feature>
<feature type="sequence conflict" description="In Ref. 5; ABB51572." evidence="22" ref="5">
    <original>G</original>
    <variation>D</variation>
    <location>
        <position position="412"/>
    </location>
</feature>
<feature type="sequence conflict" description="In Ref. 13; PWA56512." evidence="22" ref="13">
    <original>S</original>
    <variation>F</variation>
    <location>
        <position position="421"/>
    </location>
</feature>
<feature type="sequence conflict" description="In Ref. 5; ABB51572." evidence="22" ref="5">
    <original>N</original>
    <variation>D</variation>
    <location>
        <position position="443"/>
    </location>
</feature>
<feature type="sequence conflict" description="In Ref. 13; PWA56512." evidence="22" ref="13">
    <original>V</original>
    <variation>F</variation>
    <location>
        <position position="470"/>
    </location>
</feature>
<feature type="sequence conflict" description="In Ref. 13; PWA56512." evidence="22" ref="13">
    <original>A</original>
    <variation>V</variation>
    <location>
        <position position="507"/>
    </location>
</feature>
<feature type="sequence conflict" description="In Ref. 10; AIC83777." evidence="22" ref="10">
    <original>S</original>
    <variation>G</variation>
    <location>
        <position position="545"/>
    </location>
</feature>
<sequence>MSLTEEKPIRPIANFPPSIWGDQFLIYEKQVEQGVEQIVNDLKKEVRQLLKEALDIPMKHANLLKLIDEIQRLGIPYHFEREIDHALQCIYETYGDNWNGDRSSLWFRLMRKQGYYVTCDVFNNYKDKNGAFKQSLANDVEGLLELYEATSMRVPGEIILEDALGFTRSRLSIMTKDAFSTNPALFTEIQRALKQPLWKRLPRIEAAQYIPFYQQQDSHNKTLLKLAKLEFNLLQSLHKEELSHVCKWWKAFDIKKNAPCLRDRIVECYFWGLGSGYEPQYSRARVFFTKAVAVITLIDDTYDAYGTYEELKIFTEAVERWSITCLDTLPEYMKPIYKLFMDTYTEMEEFLAKEGRTDLFNCGKEFVKEFVRNLMVEAKWANEGHIPTTEEHDPVVIITGGANLLTTTCYLGMSDIFTKESVEWAVSAPPLFRYSGILGRRLNDLMTHKAEQERKHSSSSLESYMKEYNVNEEYAQTLIYKEVEDVWKDINREYLTTKNIPRPLLMAVIYLCQFLEVQYAGKDNFTRMGDEYKHLIKSLLVYPMSI</sequence>
<organism>
    <name type="scientific">Artemisia annua</name>
    <name type="common">Sweet wormwood</name>
    <dbReference type="NCBI Taxonomy" id="35608"/>
    <lineage>
        <taxon>Eukaryota</taxon>
        <taxon>Viridiplantae</taxon>
        <taxon>Streptophyta</taxon>
        <taxon>Embryophyta</taxon>
        <taxon>Tracheophyta</taxon>
        <taxon>Spermatophyta</taxon>
        <taxon>Magnoliopsida</taxon>
        <taxon>eudicotyledons</taxon>
        <taxon>Gunneridae</taxon>
        <taxon>Pentapetalae</taxon>
        <taxon>asterids</taxon>
        <taxon>campanulids</taxon>
        <taxon>Asterales</taxon>
        <taxon>Asteraceae</taxon>
        <taxon>Asteroideae</taxon>
        <taxon>Anthemideae</taxon>
        <taxon>Artemisiinae</taxon>
        <taxon>Artemisia</taxon>
    </lineage>
</organism>
<gene>
    <name evidence="21" type="primary">AMS1</name>
    <name evidence="14 16" type="synonym">ADS</name>
    <name evidence="15" type="synonym">KCS12</name>
    <name evidence="23" type="ORF">CTI12_AA415620</name>
</gene>
<name>AMS1_ARTAN</name>
<comment type="function">
    <text evidence="3 4 5 6 17">Involved in the biosynthesis of the antimalarial endoperoxide artemisinin (PubMed:10626375, PubMed:11032404, PubMed:11185551, PubMed:11289612, PubMed:27488942). Catalyzes the formation of both olefinic and oxygenated sesquiterpenes, with amorpha-4,11-diene being the major product (PubMed:10626375, PubMed:11032404, PubMed:11185551, PubMed:11289612).</text>
</comment>
<comment type="catalytic activity">
    <reaction evidence="4 5 6">
        <text>(2E,6E)-farnesyl diphosphate = (+)-amorpha-4,11-diene + diphosphate</text>
        <dbReference type="Rhea" id="RHEA:18325"/>
        <dbReference type="ChEBI" id="CHEBI:33019"/>
        <dbReference type="ChEBI" id="CHEBI:52026"/>
        <dbReference type="ChEBI" id="CHEBI:175763"/>
        <dbReference type="EC" id="4.2.3.24"/>
    </reaction>
    <physiologicalReaction direction="left-to-right" evidence="4 5 6">
        <dbReference type="Rhea" id="RHEA:18326"/>
    </physiologicalReaction>
</comment>
<comment type="cofactor">
    <cofactor evidence="1">
        <name>Mg(2+)</name>
        <dbReference type="ChEBI" id="CHEBI:18420"/>
    </cofactor>
    <cofactor evidence="1">
        <name>Mn(2+)</name>
        <dbReference type="ChEBI" id="CHEBI:29035"/>
    </cofactor>
    <text evidence="1">Binds 3 Mg(2+) or Mn(2+) ions per subunit.</text>
</comment>
<comment type="biophysicochemical properties">
    <kinetics>
        <KM evidence="3">0.6 uM for farnesyl diphosphate (at 30 degrees Celsius)</KM>
        <KM evidence="4">9 uM for farnesyl diphosphate (at pH 7.5)</KM>
        <KM evidence="4">70 uM for magnesium ions</KM>
        <KM evidence="4">13 uM for manganese ions</KM>
    </kinetics>
    <phDependence>
        <text evidence="3 4">Optimum pH is 7.5-9 (PubMed:11032404). Optimum pH is 6.5-7 (at 30 degrees Celsius) (PubMed:10626375).</text>
    </phDependence>
</comment>
<comment type="pathway">
    <text evidence="18">Sesquiterpene biosynthesis.</text>
</comment>
<comment type="subcellular location">
    <subcellularLocation>
        <location evidence="22">Cytoplasm</location>
    </subcellularLocation>
</comment>
<comment type="tissue specificity">
    <text evidence="8 9 12">Expressed both in apical and sub-apical cells of glandular secretory trichomes. Also present in non-glandular trichome cells (PubMed:30851440).</text>
</comment>
<comment type="induction">
    <text evidence="6 13">By exposure to reactive oxygen species (PubMed:11289612). Strongly induced by gibberellic acid (GA(3)) leading to an increased artemisinin yield (Ref.18).</text>
</comment>
<comment type="domain">
    <text evidence="1">The Asp-Asp-Xaa-Xaa-Asp/Glu (DDXXD/E) motif is important for the catalytic activity, presumably through binding to Mg(2+).</text>
</comment>
<comment type="biotechnology">
    <text evidence="19 20">Artemisinin and derivatives (e.g. artesunate), are antimalarial drugs due to their endoperoxidase properties; they also display multiple pharmacological actions against inflammation,viral infections, and cell and tumor proliferation (PubMed:32405226, PubMed:32514287). Artesunate may be a promising treatment for COVID-19 mediated by the severe acute respiratory syndrome coronavirus 2 (2019-nCoV) (SARS-CoV-2) because of its anti-inflammatory activity, NF-kappaB (nuclear factor kappa B)-coronavirus effect and chloroquine-like endocytosis inhibition mechanism (PubMed:32405226, PubMed:32514287).</text>
</comment>
<comment type="biotechnology">
    <text evidence="7 10 11">Yeast (S.cerevisiae) has been engineered to produce artemisinic-acid, a precursor of the antimalarial artemisinin compound, by expressing AMS1/ADS, CYP71AV1, ADH1 and ALDH1 in conjunction with CYB5 and CPR1.</text>
</comment>
<comment type="similarity">
    <text evidence="22">Belongs to the terpene synthase family.</text>
</comment>
<comment type="sequence caution" evidence="22">
    <conflict type="erroneous gene model prediction">
        <sequence resource="EMBL-CDS" id="ACL15394"/>
    </conflict>
</comment>
<comment type="sequence caution" evidence="22">
    <conflict type="erroneous initiation">
        <sequence resource="EMBL-CDS" id="ALJ03212"/>
    </conflict>
    <text>Extended N-terminus.</text>
</comment>
<comment type="sequence caution" evidence="22">
    <conflict type="erroneous gene model prediction">
        <sequence resource="EMBL-CDS" id="PWA56512"/>
    </conflict>
</comment>
<proteinExistence type="evidence at protein level"/>
<protein>
    <recommendedName>
        <fullName evidence="14 16">Amorpha-4,11-diene synthase</fullName>
        <ecNumber evidence="4 5 6">4.2.3.24</ecNumber>
    </recommendedName>
</protein>
<keyword id="KW-0963">Cytoplasm</keyword>
<keyword id="KW-0456">Lyase</keyword>
<keyword id="KW-0460">Magnesium</keyword>
<keyword id="KW-0464">Manganese</keyword>
<keyword id="KW-0479">Metal-binding</keyword>
<keyword id="KW-1185">Reference proteome</keyword>
<reference key="1">
    <citation type="journal article" date="2000" name="Arch. Biochem. Biophys.">
        <title>Molecular cloning, expression, and characterization of a amorpha-4,11-diene synthase from, a key enzyme of artemisinin biosynthesis of Artemisia annua L.</title>
        <authorList>
            <person name="Mercke P.E."/>
            <person name="Bengtsson M."/>
            <person name="Bouwmeester H.J."/>
            <person name="Posthumus M.A."/>
            <person name="Brodelius P.E."/>
        </authorList>
    </citation>
    <scope>NUCLEOTIDE SEQUENCE [MRNA]</scope>
    <scope>FUNCTION</scope>
    <scope>CATALYTIC ACTIVITY</scope>
    <scope>BIOPHYSICOCHEMICAL PROPERTIES</scope>
    <scope>PATHWAY</scope>
    <source>
        <tissue>Leaf</tissue>
    </source>
</reference>
<reference key="2">
    <citation type="submission" date="2000-12" db="EMBL/GenBank/DDBJ databases">
        <title>Cloning of sesquiterpene cyclase gene from Artemisia annua.</title>
        <authorList>
            <person name="Liu Y."/>
            <person name="Ye H.C."/>
            <person name="Li G.F."/>
        </authorList>
    </citation>
    <scope>NUCLEOTIDE SEQUENCE [GENOMIC DNA / MRNA]</scope>
    <source>
        <tissue>Leaf</tissue>
    </source>
</reference>
<reference key="3">
    <citation type="journal article" date="2000" name="Arch. Biochem. Biophys.">
        <title>Amorpha-4,11-diene synthase of Artemisia annua: cDNA isolation and bacterial expression of a terpene synthase involved in artemisinin biosynthesis.</title>
        <authorList>
            <person name="Chang Y.-J."/>
            <person name="Song S.-H."/>
            <person name="Park S.-H."/>
            <person name="Kim S.-U."/>
        </authorList>
    </citation>
    <scope>NUCLEOTIDE SEQUENCE [MRNA]</scope>
    <scope>FUNCTION</scope>
    <scope>CATALYTIC ACTIVITY</scope>
    <scope>PATHWAY</scope>
</reference>
<reference key="4">
    <citation type="journal article" date="2001" name="Planta">
        <title>Amorpha-4,11-diene synthase: cloning and functional expression of a key enzyme in the biosynthetic pathway of the novel antimalarial drug artemisinin.</title>
        <authorList>
            <person name="Wallaart T.E."/>
            <person name="Bouwmeester H.J."/>
            <person name="Hille J."/>
            <person name="Poppinga L."/>
            <person name="Maijers N.C.A."/>
        </authorList>
    </citation>
    <scope>NUCLEOTIDE SEQUENCE [MRNA]</scope>
    <scope>FUNCTION</scope>
    <scope>INDUCTION BY REACTIVE OXYGEN SPECIES</scope>
    <scope>CATALYTIC ACTIVITY</scope>
    <scope>PATHWAY</scope>
</reference>
<reference key="5">
    <citation type="submission" date="2005-10" db="EMBL/GenBank/DDBJ databases">
        <title>Cloning and sequencing of amorpha-4,11-diene synthase cDNA of Artemisia annua L.</title>
        <authorList>
            <person name="Huang Y."/>
            <person name="Feng L.L."/>
            <person name="Zeng Q.P."/>
        </authorList>
    </citation>
    <scope>NUCLEOTIDE SEQUENCE [MRNA]</scope>
    <source>
        <tissue>Leaf</tissue>
    </source>
</reference>
<reference key="6">
    <citation type="submission" date="2006-12" db="EMBL/GenBank/DDBJ databases">
        <title>Production of artemisinic acid by engineered yeast.</title>
        <authorList>
            <person name="Kong J."/>
            <person name="Wang W."/>
            <person name="Cheng K."/>
        </authorList>
    </citation>
    <scope>NUCLEOTIDE SEQUENCE [MRNA]</scope>
</reference>
<reference key="7">
    <citation type="journal article" date="2010" name="Bioinformation">
        <title>Isolation, characterization and structural studies of amorpha-4,11-diene synthase (ADS(3963)) from Artemisia annua L.</title>
        <authorList>
            <person name="Alam P."/>
            <person name="Kiran U."/>
            <person name="Ahmad M.M."/>
            <person name="Kamaluddin X."/>
            <person name="Khan M.A."/>
            <person name="Jhanwar S."/>
            <person name="Abdin M.Z."/>
        </authorList>
    </citation>
    <scope>NUCLEOTIDE SEQUENCE [GENOMIC DNA]</scope>
</reference>
<reference key="8">
    <citation type="submission" date="2010-09" db="EMBL/GenBank/DDBJ databases">
        <title>Molecular cloning of amorpha4,11 diene synthase.</title>
        <authorList>
            <person name="Banyai W."/>
            <person name="Supaibulwatana K."/>
        </authorList>
    </citation>
    <scope>NUCLEOTIDE SEQUENCE [MRNA]</scope>
</reference>
<reference key="9">
    <citation type="submission" date="2011-12" db="EMBL/GenBank/DDBJ databases">
        <title>In planta expression of Artemisia annua sesquiterepene synthase, amorpha-4, 11-diene synthase in Cichorium intybus.</title>
        <authorList>
            <person name="Ahameethunisa A.R."/>
            <person name="Hopper W."/>
        </authorList>
    </citation>
    <scope>NUCLEOTIDE SEQUENCE [MRNA]</scope>
</reference>
<reference key="10">
    <citation type="submission" date="2014-03" db="EMBL/GenBank/DDBJ databases">
        <title>Molecular cloning of amorpha 4,11 diene synthase.</title>
        <authorList>
            <person name="Sankhuan D."/>
            <person name="Chowpongpang S."/>
            <person name="Kirdmanee C."/>
            <person name="Supaibulwatana K."/>
        </authorList>
    </citation>
    <scope>NUCLEOTIDE SEQUENCE [MRNA]</scope>
</reference>
<reference key="11">
    <citation type="submission" date="2015-05" db="EMBL/GenBank/DDBJ databases">
        <title>Molecular characterization of amorpha-4,11 diene synthase from Artemisia annua L.</title>
        <authorList>
            <person name="Jhansi Rani S."/>
            <person name="Srinivasulu Y."/>
            <person name="Sujitha A."/>
            <person name="Usha R."/>
        </authorList>
    </citation>
    <scope>NUCLEOTIDE SEQUENCE [MRNA]</scope>
</reference>
<reference key="12">
    <citation type="journal article" date="2016" name="Plant Cell Physiol.">
        <title>Functional analysis of amorpha-4,11-diene synthase (ADS) homologs from non-artemisinin-producing Artemisia species: The discovery of novel koidzumiol and (+)-alpha-bisabolol synthases.</title>
        <authorList>
            <person name="Muangphrom P."/>
            <person name="Seki H."/>
            <person name="Suzuki M."/>
            <person name="Komori A."/>
            <person name="Nishiwaki M."/>
            <person name="Mikawa R."/>
            <person name="Fukushima E.O."/>
            <person name="Muranaka T."/>
        </authorList>
    </citation>
    <scope>NUCLEOTIDE SEQUENCE [GENOMIC DNA]</scope>
</reference>
<reference key="13">
    <citation type="journal article" date="2018" name="Mol. Plant">
        <title>The genome of Artemisia annua provides insight into the evolution of Asteraceae family and artemisinin biosynthesis.</title>
        <authorList>
            <person name="Shen Q."/>
            <person name="Zhang L."/>
            <person name="Liao Z."/>
            <person name="Wang S."/>
            <person name="Yan T."/>
            <person name="Shi P."/>
            <person name="Liu M."/>
            <person name="Fu X."/>
            <person name="Pan Q."/>
            <person name="Wang Y."/>
            <person name="Lv Z."/>
            <person name="Lu X."/>
            <person name="Zhang F."/>
            <person name="Jiang W."/>
            <person name="Ma Y."/>
            <person name="Chen M."/>
            <person name="Hao X."/>
            <person name="Li L."/>
            <person name="Tang Y."/>
            <person name="Lv G."/>
            <person name="Zhou Y."/>
            <person name="Sun X."/>
            <person name="Brodelius P.E."/>
            <person name="Rose J.K.C."/>
            <person name="Tang K."/>
        </authorList>
    </citation>
    <scope>NUCLEOTIDE SEQUENCE [LARGE SCALE GENOMIC DNA]</scope>
    <source>
        <strain>cv. Huhao1</strain>
        <tissue>Leaf</tissue>
    </source>
</reference>
<reference key="14">
    <citation type="submission" date="2009-01" db="EMBL/GenBank/DDBJ databases">
        <title>ADS promoter-driven GUS phenotyping in Nicotiana tabacum: a surveillance system on stress-induced expression of artemisinin biosynthesis responsible genes.</title>
        <authorList>
            <person name="Yang R.Y."/>
            <person name="Feng L.L."/>
            <person name="Yang X.Q."/>
            <person name="Zeng Q.P."/>
        </authorList>
    </citation>
    <scope>NUCLEOTIDE SEQUENCE OF 1-35</scope>
</reference>
<reference key="15">
    <citation type="journal article" date="1999" name="Phytochemistry">
        <title>Amorpha-4,11-diene synthase catalyses the first probable step in artemisinin biosynthesis.</title>
        <authorList>
            <person name="Bouwmeester H.J."/>
            <person name="Wallaart T.E."/>
            <person name="Janssen M.H."/>
            <person name="van Loo B."/>
            <person name="Jansen B.J."/>
            <person name="Posthumus M.A."/>
            <person name="Schmidt C.O."/>
            <person name="De Kraker J.W."/>
            <person name="Koenig W.A."/>
            <person name="Franssen M.C."/>
        </authorList>
    </citation>
    <scope>FUNCTION</scope>
    <scope>CATALYTIC ACTIVITY</scope>
    <scope>BIOPHYSICOCHEMICAL PROPERTIES</scope>
</reference>
<reference key="16">
    <citation type="journal article" date="2006" name="Nature">
        <title>Production of the antimalarial drug precursor artemisinic acid in engineered yeast.</title>
        <authorList>
            <person name="Ro D.-K."/>
            <person name="Paradise E.M."/>
            <person name="Ouellet M."/>
            <person name="Fisher K.J."/>
            <person name="Newman K.L."/>
            <person name="Ndungu J.M."/>
            <person name="Ho K.A."/>
            <person name="Eachus R.A."/>
            <person name="Ham T.S."/>
            <person name="Kirby J."/>
            <person name="Chang M.C.Y."/>
            <person name="Withers S.T."/>
            <person name="Shiba Y."/>
            <person name="Sarpong R."/>
            <person name="Keasling J.D."/>
        </authorList>
    </citation>
    <scope>BIOTECHNOLOGY</scope>
</reference>
<reference key="17">
    <citation type="journal article" date="2009" name="Phytochemistry">
        <title>Localization of enzymes of artemisinin biosynthesis to the apical cells of glandular secretory trichomes of Artemisia annua L.</title>
        <authorList>
            <person name="Olsson M.E."/>
            <person name="Olofsson L.M."/>
            <person name="Lindahl A.-L."/>
            <person name="Lundgren A."/>
            <person name="Brodelius M."/>
            <person name="Brodelius P.E."/>
        </authorList>
    </citation>
    <scope>TISSUE SPECIFICITY</scope>
</reference>
<reference key="18">
    <citation type="journal article" date="2011" name="Plant Growth Regul.">
        <title>Enhancement of artemisinin content and biomass in Artemisia annua by exogenous GA3 treatment.</title>
        <authorList>
            <person name="Banyai W."/>
            <person name="Mii M."/>
            <person name="Supaibulwatana K."/>
        </authorList>
    </citation>
    <scope>INDUCTION BY GIBBERELLIC ACID</scope>
</reference>
<reference key="19">
    <citation type="journal article" date="2012" name="Plant Sci.">
        <title>Trichome isolation with and without fixation using laser microdissection and pressure catapulting followed by RNA amplification: expression of genes of terpene metabolism in apical and sub-apical trichome cells of Artemisia annua L.</title>
        <authorList>
            <person name="Olofsson L."/>
            <person name="Lundgren A."/>
            <person name="Brodelius P.E."/>
        </authorList>
    </citation>
    <scope>TISSUE SPECIFICITY</scope>
</reference>
<reference key="20">
    <citation type="journal article" date="2012" name="Proc. Natl. Acad. Sci. U.S.A.">
        <title>Production of amorphadiene in yeast, and its conversion to dihydroartemisinic acid, precursor to the antimalarial agent artemisinin.</title>
        <authorList>
            <person name="Westfall P.J."/>
            <person name="Pitera D.J."/>
            <person name="Lenihan J.R."/>
            <person name="Eng D."/>
            <person name="Woolard F.X."/>
            <person name="Regentin R."/>
            <person name="Horning T."/>
            <person name="Tsuruta H."/>
            <person name="Melis D.J."/>
            <person name="Owens A."/>
            <person name="Fickes S."/>
            <person name="Diola D."/>
            <person name="Benjamin K.R."/>
            <person name="Keasling J.D."/>
            <person name="Leavell M.D."/>
            <person name="McPhee D.J."/>
            <person name="Renninger N.S."/>
            <person name="Newman J.D."/>
            <person name="Paddon C.J."/>
        </authorList>
    </citation>
    <scope>BIOTECHNOLOGY</scope>
</reference>
<reference key="21">
    <citation type="journal article" date="2013" name="Nature">
        <title>High-level semi-synthetic production of the potent antimalarial artemisinin.</title>
        <authorList>
            <person name="Paddon C.J."/>
            <person name="Westfall P.J."/>
            <person name="Pitera D.J."/>
            <person name="Benjamin K."/>
            <person name="Fisher K."/>
            <person name="McPhee D."/>
            <person name="Leavell M.D."/>
            <person name="Tai A."/>
            <person name="Main A."/>
            <person name="Eng D."/>
            <person name="Polichuk D.R."/>
            <person name="Teoh K.H."/>
            <person name="Reed D.W."/>
            <person name="Treynor T."/>
            <person name="Lenihan J."/>
            <person name="Fleck M."/>
            <person name="Bajad S."/>
            <person name="Dang G."/>
            <person name="Diola D."/>
            <person name="Dorin G."/>
            <person name="Ellens K.W."/>
            <person name="Fickes S."/>
            <person name="Galazzo J."/>
            <person name="Gaucher S.P."/>
            <person name="Geistlinger T."/>
            <person name="Henry R."/>
            <person name="Hepp M."/>
            <person name="Horning T."/>
            <person name="Iqbal T."/>
            <person name="Jiang H."/>
            <person name="Kizer L."/>
            <person name="Lieu B."/>
            <person name="Melis D."/>
            <person name="Moss N."/>
            <person name="Regentin R."/>
            <person name="Secrest S."/>
            <person name="Tsuruta H."/>
            <person name="Vazquez R."/>
            <person name="Westblade L.F."/>
            <person name="Xu L."/>
            <person name="Yu M."/>
            <person name="Zhang Y."/>
            <person name="Zhao L."/>
            <person name="Lievense J."/>
            <person name="Covello P.S."/>
            <person name="Keasling J.D."/>
            <person name="Reiling K.K."/>
            <person name="Renninger N.S."/>
            <person name="Newman J.D."/>
        </authorList>
    </citation>
    <scope>BIOTECHNOLOGY</scope>
</reference>
<reference key="22">
    <citation type="journal article" date="2016" name="Angew. Chem. Int. Ed.">
        <title>Artemisinin-A Gift from Traditional Chinese Medicine to the World (Nobel Lecture).</title>
        <authorList>
            <person name="Tu Y."/>
        </authorList>
    </citation>
    <scope>REVIEW ON ARTEMISININ ANTIMALARIAL PROPERTIES</scope>
</reference>
<reference key="23">
    <citation type="journal article" date="2019" name="Mol. Plant">
        <title>Artemisinin biosynthesis in non-glandular trichome cells of Artemisia annua.</title>
        <authorList>
            <person name="Judd R."/>
            <person name="Bagley M.C."/>
            <person name="Li M."/>
            <person name="Zhu Y."/>
            <person name="Lei C."/>
            <person name="Yuzuak S."/>
            <person name="Ekeloef M."/>
            <person name="Pu G."/>
            <person name="Zhao X."/>
            <person name="Muddiman D.C."/>
            <person name="Xie D.-Y."/>
        </authorList>
    </citation>
    <scope>TISSUE SPECIFICITY</scope>
</reference>
<reference key="24">
    <citation type="journal article" date="2019" name="Nat. Prod. Rep.">
        <title>Non-volatile natural products in plant glandular trichomes: chemistry, biological activities and biosynthesis.</title>
        <authorList>
            <person name="Liu Y."/>
            <person name="Jing S.-X."/>
            <person name="Luo S.-H."/>
            <person name="Li S.-H."/>
        </authorList>
    </citation>
    <scope>PATHWAY</scope>
    <scope>REVIEW</scope>
</reference>
<reference key="25">
    <citation type="journal article" date="2020" name="Chin. Med. J.">
        <title>Artesunate: could be an alternative drug to chloroquine in COVID-19 treatment?</title>
        <authorList>
            <person name="Uzun T."/>
            <person name="Toptas O."/>
        </authorList>
    </citation>
    <scope>BIOTECHNOLOGY</scope>
</reference>
<reference key="26">
    <citation type="journal article" date="2020" name="Pharmacol. Res.">
        <title>Anti-malarial drug, artemisinin and its derivatives for the treatment of respiratory diseases.</title>
        <authorList>
            <person name="Cheong D.H.J."/>
            <person name="Tan D.W.S."/>
            <person name="Wong F.W.S."/>
            <person name="Tran T."/>
        </authorList>
    </citation>
    <scope>BIOTECHNOLOGY</scope>
    <scope>REVIEW</scope>
</reference>